<organism>
    <name type="scientific">Mus musculus</name>
    <name type="common">Mouse</name>
    <dbReference type="NCBI Taxonomy" id="10090"/>
    <lineage>
        <taxon>Eukaryota</taxon>
        <taxon>Metazoa</taxon>
        <taxon>Chordata</taxon>
        <taxon>Craniata</taxon>
        <taxon>Vertebrata</taxon>
        <taxon>Euteleostomi</taxon>
        <taxon>Mammalia</taxon>
        <taxon>Eutheria</taxon>
        <taxon>Euarchontoglires</taxon>
        <taxon>Glires</taxon>
        <taxon>Rodentia</taxon>
        <taxon>Myomorpha</taxon>
        <taxon>Muroidea</taxon>
        <taxon>Muridae</taxon>
        <taxon>Murinae</taxon>
        <taxon>Mus</taxon>
        <taxon>Mus</taxon>
    </lineage>
</organism>
<accession>P38585</accession>
<accession>Q8R1L7</accession>
<accession>Q8VEG2</accession>
<keyword id="KW-0067">ATP-binding</keyword>
<keyword id="KW-0436">Ligase</keyword>
<keyword id="KW-0460">Magnesium</keyword>
<keyword id="KW-0547">Nucleotide-binding</keyword>
<keyword id="KW-0630">Potassium</keyword>
<keyword id="KW-1185">Reference proteome</keyword>
<protein>
    <recommendedName>
        <fullName>Tubulin--tyrosine ligase</fullName>
        <shortName>TTL</shortName>
        <ecNumber evidence="2">6.3.2.25</ecNumber>
    </recommendedName>
</protein>
<dbReference type="EC" id="6.3.2.25" evidence="2"/>
<dbReference type="EMBL" id="BC018513">
    <property type="protein sequence ID" value="AAH18513.1"/>
    <property type="molecule type" value="mRNA"/>
</dbReference>
<dbReference type="EMBL" id="BC024414">
    <property type="protein sequence ID" value="AAH24414.1"/>
    <property type="molecule type" value="mRNA"/>
</dbReference>
<dbReference type="CCDS" id="CCDS16719.1"/>
<dbReference type="RefSeq" id="NP_081468.1">
    <property type="nucleotide sequence ID" value="NM_027192.2"/>
</dbReference>
<dbReference type="SMR" id="P38585"/>
<dbReference type="FunCoup" id="P38585">
    <property type="interactions" value="265"/>
</dbReference>
<dbReference type="STRING" id="10090.ENSMUSP00000046883"/>
<dbReference type="PhosphoSitePlus" id="P38585"/>
<dbReference type="PaxDb" id="10090-ENSMUSP00000046883"/>
<dbReference type="ProteomicsDB" id="297682"/>
<dbReference type="Pumba" id="P38585"/>
<dbReference type="Antibodypedia" id="33272">
    <property type="antibodies" value="170 antibodies from 24 providers"/>
</dbReference>
<dbReference type="DNASU" id="69737"/>
<dbReference type="Ensembl" id="ENSMUST00000035812.14">
    <property type="protein sequence ID" value="ENSMUSP00000046883.8"/>
    <property type="gene ID" value="ENSMUSG00000027394.14"/>
</dbReference>
<dbReference type="GeneID" id="69737"/>
<dbReference type="KEGG" id="mmu:69737"/>
<dbReference type="UCSC" id="uc008mhe.2">
    <property type="organism name" value="mouse"/>
</dbReference>
<dbReference type="AGR" id="MGI:1916987"/>
<dbReference type="CTD" id="150465"/>
<dbReference type="MGI" id="MGI:1916987">
    <property type="gene designation" value="Ttl"/>
</dbReference>
<dbReference type="VEuPathDB" id="HostDB:ENSMUSG00000027394"/>
<dbReference type="eggNOG" id="KOG2157">
    <property type="taxonomic scope" value="Eukaryota"/>
</dbReference>
<dbReference type="GeneTree" id="ENSGT00940000161907"/>
<dbReference type="HOGENOM" id="CLU_010131_2_0_1"/>
<dbReference type="InParanoid" id="P38585"/>
<dbReference type="OMA" id="LDKTCHL"/>
<dbReference type="OrthoDB" id="202825at2759"/>
<dbReference type="PhylomeDB" id="P38585"/>
<dbReference type="TreeFam" id="TF350555"/>
<dbReference type="BioGRID-ORCS" id="69737">
    <property type="hits" value="5 hits in 79 CRISPR screens"/>
</dbReference>
<dbReference type="ChiTaRS" id="Ttl">
    <property type="organism name" value="mouse"/>
</dbReference>
<dbReference type="PRO" id="PR:P38585"/>
<dbReference type="Proteomes" id="UP000000589">
    <property type="component" value="Chromosome 2"/>
</dbReference>
<dbReference type="RNAct" id="P38585">
    <property type="molecule type" value="protein"/>
</dbReference>
<dbReference type="Bgee" id="ENSMUSG00000027394">
    <property type="expression patterns" value="Expressed in barrel cortex and 259 other cell types or tissues"/>
</dbReference>
<dbReference type="ExpressionAtlas" id="P38585">
    <property type="expression patterns" value="baseline and differential"/>
</dbReference>
<dbReference type="GO" id="GO:0005874">
    <property type="term" value="C:microtubule"/>
    <property type="evidence" value="ECO:0000305"/>
    <property type="project" value="MGI"/>
</dbReference>
<dbReference type="GO" id="GO:0005876">
    <property type="term" value="C:spindle microtubule"/>
    <property type="evidence" value="ECO:0007669"/>
    <property type="project" value="Ensembl"/>
</dbReference>
<dbReference type="GO" id="GO:0005524">
    <property type="term" value="F:ATP binding"/>
    <property type="evidence" value="ECO:0007669"/>
    <property type="project" value="UniProtKB-KW"/>
</dbReference>
<dbReference type="GO" id="GO:0004835">
    <property type="term" value="F:tubulin-tyrosine ligase activity"/>
    <property type="evidence" value="ECO:0000315"/>
    <property type="project" value="MGI"/>
</dbReference>
<dbReference type="GO" id="GO:0000226">
    <property type="term" value="P:microtubule cytoskeleton organization"/>
    <property type="evidence" value="ECO:0000315"/>
    <property type="project" value="MGI"/>
</dbReference>
<dbReference type="GO" id="GO:0045931">
    <property type="term" value="P:positive regulation of mitotic cell cycle"/>
    <property type="evidence" value="ECO:0007669"/>
    <property type="project" value="Ensembl"/>
</dbReference>
<dbReference type="GO" id="GO:0043687">
    <property type="term" value="P:post-translational protein modification"/>
    <property type="evidence" value="ECO:0007669"/>
    <property type="project" value="Ensembl"/>
</dbReference>
<dbReference type="GO" id="GO:0030516">
    <property type="term" value="P:regulation of axon extension"/>
    <property type="evidence" value="ECO:0000315"/>
    <property type="project" value="MGI"/>
</dbReference>
<dbReference type="GO" id="GO:0090235">
    <property type="term" value="P:regulation of metaphase plate congression"/>
    <property type="evidence" value="ECO:0007669"/>
    <property type="project" value="Ensembl"/>
</dbReference>
<dbReference type="FunFam" id="3.30.470.20:FF:000049">
    <property type="entry name" value="tubulin--tyrosine ligase"/>
    <property type="match status" value="1"/>
</dbReference>
<dbReference type="FunFam" id="3.40.50.11480:FF:000001">
    <property type="entry name" value="tubulin--tyrosine ligase"/>
    <property type="match status" value="1"/>
</dbReference>
<dbReference type="Gene3D" id="3.40.50.11480">
    <property type="match status" value="1"/>
</dbReference>
<dbReference type="Gene3D" id="3.30.470.20">
    <property type="entry name" value="ATP-grasp fold, B domain"/>
    <property type="match status" value="1"/>
</dbReference>
<dbReference type="InterPro" id="IPR004344">
    <property type="entry name" value="TTL/TTLL_fam"/>
</dbReference>
<dbReference type="InterPro" id="IPR052492">
    <property type="entry name" value="Tubulin-tyrosine_ligase"/>
</dbReference>
<dbReference type="PANTHER" id="PTHR46570">
    <property type="entry name" value="TUBULIN--TYROSINE LIGASE"/>
    <property type="match status" value="1"/>
</dbReference>
<dbReference type="PANTHER" id="PTHR46570:SF1">
    <property type="entry name" value="TUBULIN--TYROSINE LIGASE"/>
    <property type="match status" value="1"/>
</dbReference>
<dbReference type="Pfam" id="PF03133">
    <property type="entry name" value="TTL"/>
    <property type="match status" value="1"/>
</dbReference>
<dbReference type="SUPFAM" id="SSF56059">
    <property type="entry name" value="Glutathione synthetase ATP-binding domain-like"/>
    <property type="match status" value="1"/>
</dbReference>
<dbReference type="PROSITE" id="PS51221">
    <property type="entry name" value="TTL"/>
    <property type="match status" value="1"/>
</dbReference>
<sequence length="377" mass="43136">MYTFVVRDENSSVYAEVSRLLLATGYWKRLRRDNPRFNLMLGERNRLPFGRLGHEPGLAQLVNYYRGADKLCRKASLVKLVKTSPELSESCSWFPESYVIYPTNLKTPVAPAQNGIQLPVSNSRTDEREFFLASYNRKKEDGEGNVWIAKSSAGAKGEGILISSEASELLDFIDSQGQVHVIQKYLERPLLLEPGHRKFDIRSWVLVDHQYNIYLYREGVLRTASEPYHVDNFQDKTCHLTNHCIQKEYSKNYGKYEEGNEMFFEEFNQYLTSALNITLESSILLQIKHIIRSCLMSVEPAISTKHLPYQSFQLLGFDFMVDEELKVWLIEVNGAPACAQKLYAELCQGIVDIAISSVFPPPDTEQVPQQPAAFVKL</sequence>
<reference key="1">
    <citation type="journal article" date="2004" name="Genome Res.">
        <title>The status, quality, and expansion of the NIH full-length cDNA project: the Mammalian Gene Collection (MGC).</title>
        <authorList>
            <consortium name="The MGC Project Team"/>
        </authorList>
    </citation>
    <scope>NUCLEOTIDE SEQUENCE [LARGE SCALE MRNA]</scope>
    <source>
        <tissue>Kidney</tissue>
    </source>
</reference>
<reference key="2">
    <citation type="journal article" date="1993" name="J. Cell Biol.">
        <title>Characterization of the tubulin-tyrosine ligase.</title>
        <authorList>
            <person name="Ersfeld K."/>
            <person name="Wehland J."/>
            <person name="Plessmann U."/>
            <person name="Dodemont H."/>
            <person name="Gerke V."/>
            <person name="Weber K."/>
        </authorList>
    </citation>
    <scope>NUCLEOTIDE SEQUENCE [MRNA] OF 177-239</scope>
</reference>
<reference key="3">
    <citation type="journal article" date="2010" name="Cell">
        <title>A tissue-specific atlas of mouse protein phosphorylation and expression.</title>
        <authorList>
            <person name="Huttlin E.L."/>
            <person name="Jedrychowski M.P."/>
            <person name="Elias J.E."/>
            <person name="Goswami T."/>
            <person name="Rad R."/>
            <person name="Beausoleil S.A."/>
            <person name="Villen J."/>
            <person name="Haas W."/>
            <person name="Sowa M.E."/>
            <person name="Gygi S.P."/>
        </authorList>
    </citation>
    <scope>IDENTIFICATION BY MASS SPECTROMETRY [LARGE SCALE ANALYSIS]</scope>
    <source>
        <tissue>Brain</tissue>
        <tissue>Brown adipose tissue</tissue>
        <tissue>Lung</tissue>
    </source>
</reference>
<reference key="4">
    <citation type="journal article" date="2016" name="Science">
        <title>Detyrosinated microtubules buckle and bear load in contracting cardiomyocytes.</title>
        <authorList>
            <person name="Robison P."/>
            <person name="Caporizzo M.A."/>
            <person name="Ahmadzadeh H."/>
            <person name="Bogush A.I."/>
            <person name="Chen C.Y."/>
            <person name="Margulies K.B."/>
            <person name="Shenoy V.B."/>
            <person name="Prosser B.L."/>
        </authorList>
    </citation>
    <scope>FUNCTION</scope>
</reference>
<proteinExistence type="evidence at protein level"/>
<feature type="chain" id="PRO_0000212435" description="Tubulin--tyrosine ligase">
    <location>
        <begin position="1"/>
        <end position="377"/>
    </location>
</feature>
<feature type="domain" description="TTL" evidence="3">
    <location>
        <begin position="3"/>
        <end position="370"/>
    </location>
</feature>
<feature type="sequence conflict" description="In Ref. 2." evidence="5" ref="2">
    <original>R</original>
    <variation>Q</variation>
    <location>
        <position position="222"/>
    </location>
</feature>
<feature type="sequence conflict" description="In Ref. 2." evidence="5" ref="2">
    <original>V</original>
    <variation>M</variation>
    <location>
        <position position="230"/>
    </location>
</feature>
<feature type="sequence conflict" description="In Ref. 2." evidence="5" ref="2">
    <original>H</original>
    <variation>Q</variation>
    <location>
        <position position="239"/>
    </location>
</feature>
<feature type="sequence conflict" description="In Ref. 1; AAH24414." evidence="5" ref="1">
    <original>K</original>
    <variation>N</variation>
    <location>
        <position position="251"/>
    </location>
</feature>
<gene>
    <name type="primary">Ttl</name>
</gene>
<evidence type="ECO:0000250" key="1">
    <source>
        <dbReference type="UniProtKB" id="P38584"/>
    </source>
</evidence>
<evidence type="ECO:0000250" key="2">
    <source>
        <dbReference type="UniProtKB" id="Q9QXJ0"/>
    </source>
</evidence>
<evidence type="ECO:0000255" key="3">
    <source>
        <dbReference type="PROSITE-ProRule" id="PRU00568"/>
    </source>
</evidence>
<evidence type="ECO:0000269" key="4">
    <source>
    </source>
</evidence>
<evidence type="ECO:0000305" key="5"/>
<name>TTL_MOUSE</name>
<comment type="function">
    <text evidence="4">Catalyzes the post-translational addition of a tyrosine to the C-terminal end of detyrosinated alpha-tubulin.</text>
</comment>
<comment type="catalytic activity">
    <reaction evidence="2">
        <text>C-terminal L-alpha-aminoacyl-L-glutamyl-L-glutamyl-[tubulin] + L-tyrosine + ATP = C-terminal L-alpha-aminoacyl-L-glutamyl-L-glutamyl-L-tyrosyl-[tubulin] + ADP + phosphate + H(+)</text>
        <dbReference type="Rhea" id="RHEA:17605"/>
        <dbReference type="Rhea" id="RHEA-COMP:16434"/>
        <dbReference type="Rhea" id="RHEA-COMP:16435"/>
        <dbReference type="ChEBI" id="CHEBI:15378"/>
        <dbReference type="ChEBI" id="CHEBI:30616"/>
        <dbReference type="ChEBI" id="CHEBI:43474"/>
        <dbReference type="ChEBI" id="CHEBI:58315"/>
        <dbReference type="ChEBI" id="CHEBI:149554"/>
        <dbReference type="ChEBI" id="CHEBI:149555"/>
        <dbReference type="ChEBI" id="CHEBI:456216"/>
        <dbReference type="EC" id="6.3.2.25"/>
    </reaction>
</comment>
<comment type="cofactor">
    <cofactor evidence="1">
        <name>Mg(2+)</name>
        <dbReference type="ChEBI" id="CHEBI:18420"/>
    </cofactor>
</comment>
<comment type="cofactor">
    <cofactor evidence="1">
        <name>K(+)</name>
        <dbReference type="ChEBI" id="CHEBI:29103"/>
    </cofactor>
</comment>
<comment type="subunit">
    <text evidence="1">Monomer.</text>
</comment>
<comment type="similarity">
    <text evidence="5">Belongs to the tubulin--tyrosine ligase family.</text>
</comment>